<evidence type="ECO:0000250" key="1"/>
<evidence type="ECO:0000256" key="2">
    <source>
        <dbReference type="SAM" id="MobiDB-lite"/>
    </source>
</evidence>
<evidence type="ECO:0000305" key="3"/>
<proteinExistence type="evidence at protein level"/>
<comment type="function">
    <text evidence="1">This protein binds to a specific region on the 26S rRNA.</text>
</comment>
<comment type="similarity">
    <text evidence="3">Belongs to the universal ribosomal protein uL23 family.</text>
</comment>
<feature type="chain" id="PRO_0000325086" description="Large ribosomal subunit protein uL23">
    <location>
        <begin position="1"/>
        <end position="169"/>
    </location>
</feature>
<feature type="region of interest" description="Disordered" evidence="2">
    <location>
        <begin position="1"/>
        <end position="20"/>
    </location>
</feature>
<feature type="compositionally biased region" description="Polar residues" evidence="2">
    <location>
        <begin position="8"/>
        <end position="20"/>
    </location>
</feature>
<protein>
    <recommendedName>
        <fullName evidence="3">Large ribosomal subunit protein uL23</fullName>
    </recommendedName>
    <alternativeName>
        <fullName>60S ribosomal protein L23a</fullName>
    </alternativeName>
</protein>
<dbReference type="EMBL" id="AAFI02000217">
    <property type="protein sequence ID" value="EAL60686.1"/>
    <property type="molecule type" value="Genomic_DNA"/>
</dbReference>
<dbReference type="RefSeq" id="XP_629099.1">
    <property type="nucleotide sequence ID" value="XM_629097.1"/>
</dbReference>
<dbReference type="SMR" id="Q54BQ3"/>
<dbReference type="FunCoup" id="Q54BQ3">
    <property type="interactions" value="415"/>
</dbReference>
<dbReference type="STRING" id="44689.Q54BQ3"/>
<dbReference type="PaxDb" id="44689-DDB0230149"/>
<dbReference type="EnsemblProtists" id="EAL60686">
    <property type="protein sequence ID" value="EAL60686"/>
    <property type="gene ID" value="DDB_G0293502"/>
</dbReference>
<dbReference type="GeneID" id="8629258"/>
<dbReference type="KEGG" id="ddi:DDB_G0293502"/>
<dbReference type="dictyBase" id="DDB_G0293502">
    <property type="gene designation" value="rpl23a"/>
</dbReference>
<dbReference type="VEuPathDB" id="AmoebaDB:DDB_G0293502"/>
<dbReference type="eggNOG" id="KOG1751">
    <property type="taxonomic scope" value="Eukaryota"/>
</dbReference>
<dbReference type="HOGENOM" id="CLU_037562_0_2_1"/>
<dbReference type="InParanoid" id="Q54BQ3"/>
<dbReference type="OMA" id="CIIASEE"/>
<dbReference type="PhylomeDB" id="Q54BQ3"/>
<dbReference type="Reactome" id="R-DDI-156827">
    <property type="pathway name" value="L13a-mediated translational silencing of Ceruloplasmin expression"/>
</dbReference>
<dbReference type="Reactome" id="R-DDI-1799339">
    <property type="pathway name" value="SRP-dependent cotranslational protein targeting to membrane"/>
</dbReference>
<dbReference type="Reactome" id="R-DDI-72689">
    <property type="pathway name" value="Formation of a pool of free 40S subunits"/>
</dbReference>
<dbReference type="Reactome" id="R-DDI-72706">
    <property type="pathway name" value="GTP hydrolysis and joining of the 60S ribosomal subunit"/>
</dbReference>
<dbReference type="Reactome" id="R-DDI-975956">
    <property type="pathway name" value="Nonsense Mediated Decay (NMD) independent of the Exon Junction Complex (EJC)"/>
</dbReference>
<dbReference type="Reactome" id="R-DDI-975957">
    <property type="pathway name" value="Nonsense Mediated Decay (NMD) enhanced by the Exon Junction Complex (EJC)"/>
</dbReference>
<dbReference type="PRO" id="PR:Q54BQ3"/>
<dbReference type="Proteomes" id="UP000002195">
    <property type="component" value="Chromosome 6"/>
</dbReference>
<dbReference type="GO" id="GO:0022625">
    <property type="term" value="C:cytosolic large ribosomal subunit"/>
    <property type="evidence" value="ECO:0000318"/>
    <property type="project" value="GO_Central"/>
</dbReference>
<dbReference type="GO" id="GO:0031012">
    <property type="term" value="C:extracellular matrix"/>
    <property type="evidence" value="ECO:0007005"/>
    <property type="project" value="dictyBase"/>
</dbReference>
<dbReference type="GO" id="GO:0019843">
    <property type="term" value="F:rRNA binding"/>
    <property type="evidence" value="ECO:0007669"/>
    <property type="project" value="UniProtKB-KW"/>
</dbReference>
<dbReference type="GO" id="GO:0003735">
    <property type="term" value="F:structural constituent of ribosome"/>
    <property type="evidence" value="ECO:0000318"/>
    <property type="project" value="GO_Central"/>
</dbReference>
<dbReference type="GO" id="GO:0006412">
    <property type="term" value="P:translation"/>
    <property type="evidence" value="ECO:0007669"/>
    <property type="project" value="InterPro"/>
</dbReference>
<dbReference type="FunFam" id="3.30.70.330:FF:000741">
    <property type="entry name" value="60S ribosomal protein L23A"/>
    <property type="match status" value="1"/>
</dbReference>
<dbReference type="Gene3D" id="3.30.70.330">
    <property type="match status" value="1"/>
</dbReference>
<dbReference type="HAMAP" id="MF_01369_A">
    <property type="entry name" value="Ribosomal_uL23_A"/>
    <property type="match status" value="1"/>
</dbReference>
<dbReference type="InterPro" id="IPR012677">
    <property type="entry name" value="Nucleotide-bd_a/b_plait_sf"/>
</dbReference>
<dbReference type="InterPro" id="IPR019985">
    <property type="entry name" value="Ribosomal_uL23"/>
</dbReference>
<dbReference type="InterPro" id="IPR013025">
    <property type="entry name" value="Ribosomal_uL23-like"/>
</dbReference>
<dbReference type="InterPro" id="IPR012678">
    <property type="entry name" value="Ribosomal_uL23/eL15/eS24_sf"/>
</dbReference>
<dbReference type="InterPro" id="IPR001014">
    <property type="entry name" value="Ribosomal_uL23_CS"/>
</dbReference>
<dbReference type="InterPro" id="IPR005633">
    <property type="entry name" value="Ribosomal_uL23_N"/>
</dbReference>
<dbReference type="NCBIfam" id="NF011118">
    <property type="entry name" value="PRK14548.1"/>
    <property type="match status" value="1"/>
</dbReference>
<dbReference type="NCBIfam" id="TIGR03636">
    <property type="entry name" value="uL23_arch"/>
    <property type="match status" value="1"/>
</dbReference>
<dbReference type="PANTHER" id="PTHR11620">
    <property type="entry name" value="60S RIBOSOMAL PROTEIN L23A"/>
    <property type="match status" value="1"/>
</dbReference>
<dbReference type="Pfam" id="PF00276">
    <property type="entry name" value="Ribosomal_L23"/>
    <property type="match status" value="1"/>
</dbReference>
<dbReference type="Pfam" id="PF03939">
    <property type="entry name" value="Ribosomal_L23eN"/>
    <property type="match status" value="1"/>
</dbReference>
<dbReference type="SUPFAM" id="SSF54189">
    <property type="entry name" value="Ribosomal proteins S24e, L23 and L15e"/>
    <property type="match status" value="1"/>
</dbReference>
<dbReference type="PROSITE" id="PS00050">
    <property type="entry name" value="RIBOSOMAL_L23"/>
    <property type="match status" value="1"/>
</dbReference>
<keyword id="KW-0903">Direct protein sequencing</keyword>
<keyword id="KW-1185">Reference proteome</keyword>
<keyword id="KW-0687">Ribonucleoprotein</keyword>
<keyword id="KW-0689">Ribosomal protein</keyword>
<keyword id="KW-0694">RNA-binding</keyword>
<keyword id="KW-0699">rRNA-binding</keyword>
<reference key="1">
    <citation type="journal article" date="2005" name="Nature">
        <title>The genome of the social amoeba Dictyostelium discoideum.</title>
        <authorList>
            <person name="Eichinger L."/>
            <person name="Pachebat J.A."/>
            <person name="Gloeckner G."/>
            <person name="Rajandream M.A."/>
            <person name="Sucgang R."/>
            <person name="Berriman M."/>
            <person name="Song J."/>
            <person name="Olsen R."/>
            <person name="Szafranski K."/>
            <person name="Xu Q."/>
            <person name="Tunggal B."/>
            <person name="Kummerfeld S."/>
            <person name="Madera M."/>
            <person name="Konfortov B.A."/>
            <person name="Rivero F."/>
            <person name="Bankier A.T."/>
            <person name="Lehmann R."/>
            <person name="Hamlin N."/>
            <person name="Davies R."/>
            <person name="Gaudet P."/>
            <person name="Fey P."/>
            <person name="Pilcher K."/>
            <person name="Chen G."/>
            <person name="Saunders D."/>
            <person name="Sodergren E.J."/>
            <person name="Davis P."/>
            <person name="Kerhornou A."/>
            <person name="Nie X."/>
            <person name="Hall N."/>
            <person name="Anjard C."/>
            <person name="Hemphill L."/>
            <person name="Bason N."/>
            <person name="Farbrother P."/>
            <person name="Desany B."/>
            <person name="Just E."/>
            <person name="Morio T."/>
            <person name="Rost R."/>
            <person name="Churcher C.M."/>
            <person name="Cooper J."/>
            <person name="Haydock S."/>
            <person name="van Driessche N."/>
            <person name="Cronin A."/>
            <person name="Goodhead I."/>
            <person name="Muzny D.M."/>
            <person name="Mourier T."/>
            <person name="Pain A."/>
            <person name="Lu M."/>
            <person name="Harper D."/>
            <person name="Lindsay R."/>
            <person name="Hauser H."/>
            <person name="James K.D."/>
            <person name="Quiles M."/>
            <person name="Madan Babu M."/>
            <person name="Saito T."/>
            <person name="Buchrieser C."/>
            <person name="Wardroper A."/>
            <person name="Felder M."/>
            <person name="Thangavelu M."/>
            <person name="Johnson D."/>
            <person name="Knights A."/>
            <person name="Loulseged H."/>
            <person name="Mungall K.L."/>
            <person name="Oliver K."/>
            <person name="Price C."/>
            <person name="Quail M.A."/>
            <person name="Urushihara H."/>
            <person name="Hernandez J."/>
            <person name="Rabbinowitsch E."/>
            <person name="Steffen D."/>
            <person name="Sanders M."/>
            <person name="Ma J."/>
            <person name="Kohara Y."/>
            <person name="Sharp S."/>
            <person name="Simmonds M.N."/>
            <person name="Spiegler S."/>
            <person name="Tivey A."/>
            <person name="Sugano S."/>
            <person name="White B."/>
            <person name="Walker D."/>
            <person name="Woodward J.R."/>
            <person name="Winckler T."/>
            <person name="Tanaka Y."/>
            <person name="Shaulsky G."/>
            <person name="Schleicher M."/>
            <person name="Weinstock G.M."/>
            <person name="Rosenthal A."/>
            <person name="Cox E.C."/>
            <person name="Chisholm R.L."/>
            <person name="Gibbs R.A."/>
            <person name="Loomis W.F."/>
            <person name="Platzer M."/>
            <person name="Kay R.R."/>
            <person name="Williams J.G."/>
            <person name="Dear P.H."/>
            <person name="Noegel A.A."/>
            <person name="Barrell B.G."/>
            <person name="Kuspa A."/>
        </authorList>
    </citation>
    <scope>NUCLEOTIDE SEQUENCE [LARGE SCALE GENOMIC DNA]</scope>
    <source>
        <strain>AX4</strain>
    </source>
</reference>
<reference key="2">
    <citation type="submission" date="2010-01" db="UniProtKB">
        <authorList>
            <person name="Bienvenut W.V."/>
            <person name="Veltman D.M."/>
            <person name="Insall R.H."/>
        </authorList>
    </citation>
    <scope>PROTEIN SEQUENCE OF 89-102; 120-128 AND 137-144</scope>
    <scope>IDENTIFICATION BY MASS SPECTROMETRY</scope>
</reference>
<accession>Q54BQ3</accession>
<gene>
    <name type="primary">rpl23a</name>
    <name type="ORF">DDB_G0293502</name>
</gene>
<sequence>MAGKKVKSNTPKQDLSVSKSKLTSIKAPAAAIKAKAAASAVKKGVSNKSTRKVRTSVIFRRPVTLNNPKKPAYPRRSVNKITKMDQFRILKAPLTTESATQKIEGSNTITFMVDMFANKSQVADAVAKMYDVKVKRVNTLITPRGEKKAFVTLSPEFEAADVANKIGLI</sequence>
<organism>
    <name type="scientific">Dictyostelium discoideum</name>
    <name type="common">Social amoeba</name>
    <dbReference type="NCBI Taxonomy" id="44689"/>
    <lineage>
        <taxon>Eukaryota</taxon>
        <taxon>Amoebozoa</taxon>
        <taxon>Evosea</taxon>
        <taxon>Eumycetozoa</taxon>
        <taxon>Dictyostelia</taxon>
        <taxon>Dictyosteliales</taxon>
        <taxon>Dictyosteliaceae</taxon>
        <taxon>Dictyostelium</taxon>
    </lineage>
</organism>
<name>RL23A_DICDI</name>